<evidence type="ECO:0000255" key="1">
    <source>
        <dbReference type="HAMAP-Rule" id="MF_00632"/>
    </source>
</evidence>
<accession>Q1C4J6</accession>
<feature type="chain" id="PRO_0000261992" description="Nucleotide-binding protein YPA_2664">
    <location>
        <begin position="1"/>
        <end position="163"/>
    </location>
</feature>
<name>Y2664_YERPA</name>
<organism>
    <name type="scientific">Yersinia pestis bv. Antiqua (strain Antiqua)</name>
    <dbReference type="NCBI Taxonomy" id="360102"/>
    <lineage>
        <taxon>Bacteria</taxon>
        <taxon>Pseudomonadati</taxon>
        <taxon>Pseudomonadota</taxon>
        <taxon>Gammaproteobacteria</taxon>
        <taxon>Enterobacterales</taxon>
        <taxon>Yersiniaceae</taxon>
        <taxon>Yersinia</taxon>
    </lineage>
</organism>
<proteinExistence type="inferred from homology"/>
<reference key="1">
    <citation type="journal article" date="2006" name="J. Bacteriol.">
        <title>Complete genome sequence of Yersinia pestis strains Antiqua and Nepal516: evidence of gene reduction in an emerging pathogen.</title>
        <authorList>
            <person name="Chain P.S.G."/>
            <person name="Hu P."/>
            <person name="Malfatti S.A."/>
            <person name="Radnedge L."/>
            <person name="Larimer F."/>
            <person name="Vergez L.M."/>
            <person name="Worsham P."/>
            <person name="Chu M.C."/>
            <person name="Andersen G.L."/>
        </authorList>
    </citation>
    <scope>NUCLEOTIDE SEQUENCE [LARGE SCALE GENOMIC DNA]</scope>
    <source>
        <strain>Antiqua</strain>
    </source>
</reference>
<protein>
    <recommendedName>
        <fullName evidence="1">Nucleotide-binding protein YPA_2664</fullName>
    </recommendedName>
</protein>
<comment type="function">
    <text evidence="1">Nucleotide-binding protein.</text>
</comment>
<comment type="similarity">
    <text evidence="1">Belongs to the YajQ family.</text>
</comment>
<gene>
    <name type="ordered locus">YPA_2664</name>
</gene>
<dbReference type="EMBL" id="CP000308">
    <property type="protein sequence ID" value="ABG14626.1"/>
    <property type="molecule type" value="Genomic_DNA"/>
</dbReference>
<dbReference type="RefSeq" id="WP_002208655.1">
    <property type="nucleotide sequence ID" value="NZ_CP009906.1"/>
</dbReference>
<dbReference type="SMR" id="Q1C4J6"/>
<dbReference type="KEGG" id="ypa:YPA_2664"/>
<dbReference type="Proteomes" id="UP000001971">
    <property type="component" value="Chromosome"/>
</dbReference>
<dbReference type="GO" id="GO:0005829">
    <property type="term" value="C:cytosol"/>
    <property type="evidence" value="ECO:0007669"/>
    <property type="project" value="TreeGrafter"/>
</dbReference>
<dbReference type="GO" id="GO:0000166">
    <property type="term" value="F:nucleotide binding"/>
    <property type="evidence" value="ECO:0007669"/>
    <property type="project" value="TreeGrafter"/>
</dbReference>
<dbReference type="CDD" id="cd11740">
    <property type="entry name" value="YajQ_like"/>
    <property type="match status" value="1"/>
</dbReference>
<dbReference type="FunFam" id="3.30.70.860:FF:000001">
    <property type="entry name" value="UPF0234 protein YajQ"/>
    <property type="match status" value="1"/>
</dbReference>
<dbReference type="FunFam" id="3.30.70.990:FF:000001">
    <property type="entry name" value="UPF0234 protein YajQ"/>
    <property type="match status" value="1"/>
</dbReference>
<dbReference type="Gene3D" id="3.30.70.860">
    <property type="match status" value="1"/>
</dbReference>
<dbReference type="Gene3D" id="3.30.70.990">
    <property type="entry name" value="YajQ-like, domain 2"/>
    <property type="match status" value="1"/>
</dbReference>
<dbReference type="HAMAP" id="MF_00632">
    <property type="entry name" value="YajQ"/>
    <property type="match status" value="1"/>
</dbReference>
<dbReference type="InterPro" id="IPR007551">
    <property type="entry name" value="DUF520"/>
</dbReference>
<dbReference type="InterPro" id="IPR035571">
    <property type="entry name" value="UPF0234-like_C"/>
</dbReference>
<dbReference type="InterPro" id="IPR035570">
    <property type="entry name" value="UPF0234_N"/>
</dbReference>
<dbReference type="InterPro" id="IPR036183">
    <property type="entry name" value="YajQ-like_sf"/>
</dbReference>
<dbReference type="NCBIfam" id="NF003819">
    <property type="entry name" value="PRK05412.1"/>
    <property type="match status" value="1"/>
</dbReference>
<dbReference type="PANTHER" id="PTHR30476">
    <property type="entry name" value="UPF0234 PROTEIN YAJQ"/>
    <property type="match status" value="1"/>
</dbReference>
<dbReference type="PANTHER" id="PTHR30476:SF0">
    <property type="entry name" value="UPF0234 PROTEIN YAJQ"/>
    <property type="match status" value="1"/>
</dbReference>
<dbReference type="Pfam" id="PF04461">
    <property type="entry name" value="DUF520"/>
    <property type="match status" value="1"/>
</dbReference>
<dbReference type="SUPFAM" id="SSF89963">
    <property type="entry name" value="YajQ-like"/>
    <property type="match status" value="2"/>
</dbReference>
<keyword id="KW-0547">Nucleotide-binding</keyword>
<sequence length="163" mass="18350">MPSFDIVSEIDMQEVRNAVENATRDLANRWDFRNVPASFELNEKNESIKVVSESDFQVEQLLDILRAQLSKRGIEGAALEIPEEMARSGKTYSVDAKLKQGIESVQAKKLVKLIKDSKLKVQAQIQGEQVRVTGKARDDLQAVMALVRAADLGQPFQFNNFRD</sequence>